<keyword id="KW-0030">Aminoacyl-tRNA synthetase</keyword>
<keyword id="KW-0067">ATP-binding</keyword>
<keyword id="KW-0963">Cytoplasm</keyword>
<keyword id="KW-0436">Ligase</keyword>
<keyword id="KW-0547">Nucleotide-binding</keyword>
<keyword id="KW-0648">Protein biosynthesis</keyword>
<keyword id="KW-1185">Reference proteome</keyword>
<name>SYH_LIGS1</name>
<gene>
    <name evidence="1" type="primary">hisS</name>
    <name type="ordered locus">LSL_0852</name>
</gene>
<sequence>MKYQRPKGTADILPSESAKWQYVEEKARELFKKYRYEEMRTPIFESFEVFSRTSGETSDIVTKEMYDFYDKGDRHITLRPEGTAGVVRSFVENKLYGPEVQKPFKTYYMGPMFRYERPQSGRLREFHQIGVEAFGVDNPTLDVEVMAMAVDLLKSFGLNSLRVAVNTLGDLETRNNYRQALIDYLEPFEAELSDDSKERLHKNPLRVLDSKDEKDKEIVANAPSILDYLTEDAQKHFETVKSLLNDLGIEYVIDSNMVRGLDYYNHTIFEIMSDSKAFNGKWTTVCAGGHYSGLVEQLGGPQTPGVGFGLGVERLLLILDAEEDTLPIENPLDVYVVGIGDVTNAVTLKLVQNLRHQGFTADRDYLNRKPKGQFKSANRLNARFTLTIGETELQEQEANLKFMKNGNEISVKLADVENDFASLEKLAVEGE</sequence>
<reference key="1">
    <citation type="journal article" date="2006" name="Proc. Natl. Acad. Sci. U.S.A.">
        <title>Multireplicon genome architecture of Lactobacillus salivarius.</title>
        <authorList>
            <person name="Claesson M.J."/>
            <person name="Li Y."/>
            <person name="Leahy S."/>
            <person name="Canchaya C."/>
            <person name="van Pijkeren J.P."/>
            <person name="Cerdeno-Tarraga A.M."/>
            <person name="Parkhill J."/>
            <person name="Flynn S."/>
            <person name="O'Sullivan G.C."/>
            <person name="Collins J.K."/>
            <person name="Higgins D."/>
            <person name="Shanahan F."/>
            <person name="Fitzgerald G.F."/>
            <person name="van Sinderen D."/>
            <person name="O'Toole P.W."/>
        </authorList>
    </citation>
    <scope>NUCLEOTIDE SEQUENCE [LARGE SCALE GENOMIC DNA]</scope>
    <source>
        <strain>UCC118</strain>
    </source>
</reference>
<protein>
    <recommendedName>
        <fullName evidence="1">Histidine--tRNA ligase</fullName>
        <ecNumber evidence="1">6.1.1.21</ecNumber>
    </recommendedName>
    <alternativeName>
        <fullName evidence="1">Histidyl-tRNA synthetase</fullName>
        <shortName evidence="1">HisRS</shortName>
    </alternativeName>
</protein>
<evidence type="ECO:0000255" key="1">
    <source>
        <dbReference type="HAMAP-Rule" id="MF_00127"/>
    </source>
</evidence>
<proteinExistence type="inferred from homology"/>
<feature type="chain" id="PRO_1000016382" description="Histidine--tRNA ligase">
    <location>
        <begin position="1"/>
        <end position="431"/>
    </location>
</feature>
<accession>Q1WTV0</accession>
<dbReference type="EC" id="6.1.1.21" evidence="1"/>
<dbReference type="EMBL" id="CP000233">
    <property type="protein sequence ID" value="ABD99662.1"/>
    <property type="molecule type" value="Genomic_DNA"/>
</dbReference>
<dbReference type="RefSeq" id="WP_011475997.1">
    <property type="nucleotide sequence ID" value="NC_007929.1"/>
</dbReference>
<dbReference type="RefSeq" id="YP_535745.1">
    <property type="nucleotide sequence ID" value="NC_007929.1"/>
</dbReference>
<dbReference type="SMR" id="Q1WTV0"/>
<dbReference type="STRING" id="362948.LSL_0852"/>
<dbReference type="KEGG" id="lsl:LSL_0852"/>
<dbReference type="PATRIC" id="fig|362948.14.peg.927"/>
<dbReference type="HOGENOM" id="CLU_025113_1_1_9"/>
<dbReference type="OrthoDB" id="9800814at2"/>
<dbReference type="Proteomes" id="UP000006559">
    <property type="component" value="Chromosome"/>
</dbReference>
<dbReference type="GO" id="GO:0005737">
    <property type="term" value="C:cytoplasm"/>
    <property type="evidence" value="ECO:0007669"/>
    <property type="project" value="UniProtKB-SubCell"/>
</dbReference>
<dbReference type="GO" id="GO:0005524">
    <property type="term" value="F:ATP binding"/>
    <property type="evidence" value="ECO:0007669"/>
    <property type="project" value="UniProtKB-UniRule"/>
</dbReference>
<dbReference type="GO" id="GO:0140096">
    <property type="term" value="F:catalytic activity, acting on a protein"/>
    <property type="evidence" value="ECO:0007669"/>
    <property type="project" value="UniProtKB-ARBA"/>
</dbReference>
<dbReference type="GO" id="GO:0004821">
    <property type="term" value="F:histidine-tRNA ligase activity"/>
    <property type="evidence" value="ECO:0007669"/>
    <property type="project" value="UniProtKB-UniRule"/>
</dbReference>
<dbReference type="GO" id="GO:0016740">
    <property type="term" value="F:transferase activity"/>
    <property type="evidence" value="ECO:0007669"/>
    <property type="project" value="UniProtKB-ARBA"/>
</dbReference>
<dbReference type="GO" id="GO:0006427">
    <property type="term" value="P:histidyl-tRNA aminoacylation"/>
    <property type="evidence" value="ECO:0007669"/>
    <property type="project" value="UniProtKB-UniRule"/>
</dbReference>
<dbReference type="CDD" id="cd00773">
    <property type="entry name" value="HisRS-like_core"/>
    <property type="match status" value="1"/>
</dbReference>
<dbReference type="CDD" id="cd00859">
    <property type="entry name" value="HisRS_anticodon"/>
    <property type="match status" value="1"/>
</dbReference>
<dbReference type="FunFam" id="3.30.930.10:FF:000005">
    <property type="entry name" value="Histidine--tRNA ligase"/>
    <property type="match status" value="1"/>
</dbReference>
<dbReference type="Gene3D" id="3.40.50.800">
    <property type="entry name" value="Anticodon-binding domain"/>
    <property type="match status" value="1"/>
</dbReference>
<dbReference type="Gene3D" id="3.30.930.10">
    <property type="entry name" value="Bira Bifunctional Protein, Domain 2"/>
    <property type="match status" value="1"/>
</dbReference>
<dbReference type="HAMAP" id="MF_00127">
    <property type="entry name" value="His_tRNA_synth"/>
    <property type="match status" value="1"/>
</dbReference>
<dbReference type="InterPro" id="IPR006195">
    <property type="entry name" value="aa-tRNA-synth_II"/>
</dbReference>
<dbReference type="InterPro" id="IPR045864">
    <property type="entry name" value="aa-tRNA-synth_II/BPL/LPL"/>
</dbReference>
<dbReference type="InterPro" id="IPR004154">
    <property type="entry name" value="Anticodon-bd"/>
</dbReference>
<dbReference type="InterPro" id="IPR036621">
    <property type="entry name" value="Anticodon-bd_dom_sf"/>
</dbReference>
<dbReference type="InterPro" id="IPR015807">
    <property type="entry name" value="His-tRNA-ligase"/>
</dbReference>
<dbReference type="InterPro" id="IPR041715">
    <property type="entry name" value="HisRS-like_core"/>
</dbReference>
<dbReference type="InterPro" id="IPR004516">
    <property type="entry name" value="HisRS/HisZ"/>
</dbReference>
<dbReference type="InterPro" id="IPR033656">
    <property type="entry name" value="HisRS_anticodon"/>
</dbReference>
<dbReference type="NCBIfam" id="TIGR00442">
    <property type="entry name" value="hisS"/>
    <property type="match status" value="1"/>
</dbReference>
<dbReference type="PANTHER" id="PTHR43707:SF1">
    <property type="entry name" value="HISTIDINE--TRNA LIGASE, MITOCHONDRIAL-RELATED"/>
    <property type="match status" value="1"/>
</dbReference>
<dbReference type="PANTHER" id="PTHR43707">
    <property type="entry name" value="HISTIDYL-TRNA SYNTHETASE"/>
    <property type="match status" value="1"/>
</dbReference>
<dbReference type="Pfam" id="PF03129">
    <property type="entry name" value="HGTP_anticodon"/>
    <property type="match status" value="1"/>
</dbReference>
<dbReference type="Pfam" id="PF13393">
    <property type="entry name" value="tRNA-synt_His"/>
    <property type="match status" value="1"/>
</dbReference>
<dbReference type="PIRSF" id="PIRSF001549">
    <property type="entry name" value="His-tRNA_synth"/>
    <property type="match status" value="1"/>
</dbReference>
<dbReference type="SUPFAM" id="SSF52954">
    <property type="entry name" value="Class II aaRS ABD-related"/>
    <property type="match status" value="1"/>
</dbReference>
<dbReference type="SUPFAM" id="SSF55681">
    <property type="entry name" value="Class II aaRS and biotin synthetases"/>
    <property type="match status" value="1"/>
</dbReference>
<dbReference type="PROSITE" id="PS50862">
    <property type="entry name" value="AA_TRNA_LIGASE_II"/>
    <property type="match status" value="1"/>
</dbReference>
<organism>
    <name type="scientific">Ligilactobacillus salivarius (strain UCC118)</name>
    <name type="common">Lactobacillus salivarius</name>
    <dbReference type="NCBI Taxonomy" id="362948"/>
    <lineage>
        <taxon>Bacteria</taxon>
        <taxon>Bacillati</taxon>
        <taxon>Bacillota</taxon>
        <taxon>Bacilli</taxon>
        <taxon>Lactobacillales</taxon>
        <taxon>Lactobacillaceae</taxon>
        <taxon>Ligilactobacillus</taxon>
    </lineage>
</organism>
<comment type="catalytic activity">
    <reaction evidence="1">
        <text>tRNA(His) + L-histidine + ATP = L-histidyl-tRNA(His) + AMP + diphosphate + H(+)</text>
        <dbReference type="Rhea" id="RHEA:17313"/>
        <dbReference type="Rhea" id="RHEA-COMP:9665"/>
        <dbReference type="Rhea" id="RHEA-COMP:9689"/>
        <dbReference type="ChEBI" id="CHEBI:15378"/>
        <dbReference type="ChEBI" id="CHEBI:30616"/>
        <dbReference type="ChEBI" id="CHEBI:33019"/>
        <dbReference type="ChEBI" id="CHEBI:57595"/>
        <dbReference type="ChEBI" id="CHEBI:78442"/>
        <dbReference type="ChEBI" id="CHEBI:78527"/>
        <dbReference type="ChEBI" id="CHEBI:456215"/>
        <dbReference type="EC" id="6.1.1.21"/>
    </reaction>
</comment>
<comment type="subunit">
    <text evidence="1">Homodimer.</text>
</comment>
<comment type="subcellular location">
    <subcellularLocation>
        <location evidence="1">Cytoplasm</location>
    </subcellularLocation>
</comment>
<comment type="similarity">
    <text evidence="1">Belongs to the class-II aminoacyl-tRNA synthetase family.</text>
</comment>